<comment type="function">
    <text evidence="1">Peptide chain release factor 2 directs the termination of translation in response to the peptide chain termination codons UGA and UAA.</text>
</comment>
<comment type="subcellular location">
    <subcellularLocation>
        <location evidence="1">Cytoplasm</location>
    </subcellularLocation>
</comment>
<comment type="PTM">
    <text evidence="1">Methylated by PrmC. Methylation increases the termination efficiency of RF2.</text>
</comment>
<comment type="similarity">
    <text evidence="1">Belongs to the prokaryotic/mitochondrial release factor family.</text>
</comment>
<organism>
    <name type="scientific">Campylobacter jejuni subsp. doylei (strain ATCC BAA-1458 / RM4099 / 269.97)</name>
    <dbReference type="NCBI Taxonomy" id="360109"/>
    <lineage>
        <taxon>Bacteria</taxon>
        <taxon>Pseudomonadati</taxon>
        <taxon>Campylobacterota</taxon>
        <taxon>Epsilonproteobacteria</taxon>
        <taxon>Campylobacterales</taxon>
        <taxon>Campylobacteraceae</taxon>
        <taxon>Campylobacter</taxon>
    </lineage>
</organism>
<proteinExistence type="inferred from homology"/>
<name>RF2_CAMJD</name>
<protein>
    <recommendedName>
        <fullName evidence="1">Peptide chain release factor 2</fullName>
        <shortName evidence="1">RF-2</shortName>
    </recommendedName>
</protein>
<sequence length="365" mass="41121">MDNYEFSELLKTLKNKVGNIASIIKPKNIQTRLKEIEELENSPSFWNDVKQAGIIGKEKTKITNLLKNYENAFNALNDASELFDLANSENDIETLQALFNDAPKLEDTITSLEISMLLSGENDGKNAIVSIHPGAGGTESNDWASILYRMYLRFCEREGFKVETLDFQEGEEAGLKDVSFLVKGENAYGYLKAENGIHRLVRTSPFDSAGRRHTSFSSVMVSPELDDDIEIEIEEKDIRIDYYRASGAGGQHVNKTESAVRITHFPTGIVVQCQNDRSQHKNKATAFKMLKSRLYELELMKQQDSANSSEKSEIGWGHQIRSYVLFPYQQVKDNRSGEAFSQVDNILDGDIKKMIEGVLIALKAE</sequence>
<gene>
    <name evidence="1" type="primary">prfB</name>
    <name type="ordered locus">JJD26997_1790</name>
</gene>
<evidence type="ECO:0000255" key="1">
    <source>
        <dbReference type="HAMAP-Rule" id="MF_00094"/>
    </source>
</evidence>
<keyword id="KW-0963">Cytoplasm</keyword>
<keyword id="KW-0488">Methylation</keyword>
<keyword id="KW-0648">Protein biosynthesis</keyword>
<feature type="chain" id="PRO_1000004980" description="Peptide chain release factor 2">
    <location>
        <begin position="1"/>
        <end position="365"/>
    </location>
</feature>
<feature type="modified residue" description="N5-methylglutamine" evidence="1">
    <location>
        <position position="251"/>
    </location>
</feature>
<reference key="1">
    <citation type="submission" date="2007-07" db="EMBL/GenBank/DDBJ databases">
        <title>Complete genome sequence of Campylobacter jejuni subsp doylei 269.97 isolated from human blood.</title>
        <authorList>
            <person name="Fouts D.E."/>
            <person name="Mongodin E.F."/>
            <person name="Puiu D."/>
            <person name="Sebastian Y."/>
            <person name="Miller W.G."/>
            <person name="Mandrell R.E."/>
            <person name="Lastovica A.J."/>
            <person name="Nelson K.E."/>
        </authorList>
    </citation>
    <scope>NUCLEOTIDE SEQUENCE [LARGE SCALE GENOMIC DNA]</scope>
    <source>
        <strain>ATCC BAA-1458 / RM4099 / 269.97</strain>
    </source>
</reference>
<accession>A7H5G4</accession>
<dbReference type="EMBL" id="CP000768">
    <property type="protein sequence ID" value="ABS44503.1"/>
    <property type="molecule type" value="Genomic_DNA"/>
</dbReference>
<dbReference type="SMR" id="A7H5G4"/>
<dbReference type="KEGG" id="cjd:JJD26997_1790"/>
<dbReference type="HOGENOM" id="CLU_036856_6_0_7"/>
<dbReference type="Proteomes" id="UP000002302">
    <property type="component" value="Chromosome"/>
</dbReference>
<dbReference type="GO" id="GO:0005737">
    <property type="term" value="C:cytoplasm"/>
    <property type="evidence" value="ECO:0007669"/>
    <property type="project" value="UniProtKB-SubCell"/>
</dbReference>
<dbReference type="GO" id="GO:0016149">
    <property type="term" value="F:translation release factor activity, codon specific"/>
    <property type="evidence" value="ECO:0007669"/>
    <property type="project" value="UniProtKB-UniRule"/>
</dbReference>
<dbReference type="FunFam" id="3.30.160.20:FF:000010">
    <property type="entry name" value="Peptide chain release factor 2"/>
    <property type="match status" value="1"/>
</dbReference>
<dbReference type="Gene3D" id="3.30.160.20">
    <property type="match status" value="1"/>
</dbReference>
<dbReference type="Gene3D" id="3.30.70.1660">
    <property type="match status" value="1"/>
</dbReference>
<dbReference type="Gene3D" id="1.20.58.410">
    <property type="entry name" value="Release factor"/>
    <property type="match status" value="1"/>
</dbReference>
<dbReference type="HAMAP" id="MF_00094">
    <property type="entry name" value="Rel_fac_2"/>
    <property type="match status" value="1"/>
</dbReference>
<dbReference type="InterPro" id="IPR005139">
    <property type="entry name" value="PCRF"/>
</dbReference>
<dbReference type="InterPro" id="IPR000352">
    <property type="entry name" value="Pep_chain_release_fac_I"/>
</dbReference>
<dbReference type="InterPro" id="IPR045853">
    <property type="entry name" value="Pep_chain_release_fac_I_sf"/>
</dbReference>
<dbReference type="InterPro" id="IPR004374">
    <property type="entry name" value="PrfB"/>
</dbReference>
<dbReference type="NCBIfam" id="TIGR00020">
    <property type="entry name" value="prfB"/>
    <property type="match status" value="1"/>
</dbReference>
<dbReference type="PANTHER" id="PTHR43116:SF3">
    <property type="entry name" value="CLASS I PEPTIDE CHAIN RELEASE FACTOR"/>
    <property type="match status" value="1"/>
</dbReference>
<dbReference type="PANTHER" id="PTHR43116">
    <property type="entry name" value="PEPTIDE CHAIN RELEASE FACTOR 2"/>
    <property type="match status" value="1"/>
</dbReference>
<dbReference type="Pfam" id="PF03462">
    <property type="entry name" value="PCRF"/>
    <property type="match status" value="1"/>
</dbReference>
<dbReference type="Pfam" id="PF00472">
    <property type="entry name" value="RF-1"/>
    <property type="match status" value="1"/>
</dbReference>
<dbReference type="SMART" id="SM00937">
    <property type="entry name" value="PCRF"/>
    <property type="match status" value="1"/>
</dbReference>
<dbReference type="SUPFAM" id="SSF75620">
    <property type="entry name" value="Release factor"/>
    <property type="match status" value="1"/>
</dbReference>
<dbReference type="PROSITE" id="PS00745">
    <property type="entry name" value="RF_PROK_I"/>
    <property type="match status" value="1"/>
</dbReference>